<comment type="catalytic activity">
    <reaction evidence="1">
        <text>(2R)-3-phosphoglycerate + ATP = (2R)-3-phospho-glyceroyl phosphate + ADP</text>
        <dbReference type="Rhea" id="RHEA:14801"/>
        <dbReference type="ChEBI" id="CHEBI:30616"/>
        <dbReference type="ChEBI" id="CHEBI:57604"/>
        <dbReference type="ChEBI" id="CHEBI:58272"/>
        <dbReference type="ChEBI" id="CHEBI:456216"/>
        <dbReference type="EC" id="2.7.2.3"/>
    </reaction>
</comment>
<comment type="pathway">
    <text evidence="1">Carbohydrate degradation; glycolysis; pyruvate from D-glyceraldehyde 3-phosphate: step 2/5.</text>
</comment>
<comment type="subunit">
    <text evidence="1">Monomer.</text>
</comment>
<comment type="subcellular location">
    <subcellularLocation>
        <location evidence="1">Cytoplasm</location>
    </subcellularLocation>
</comment>
<comment type="similarity">
    <text evidence="1">Belongs to the phosphoglycerate kinase family.</text>
</comment>
<evidence type="ECO:0000255" key="1">
    <source>
        <dbReference type="HAMAP-Rule" id="MF_00145"/>
    </source>
</evidence>
<dbReference type="EC" id="2.7.2.3" evidence="1"/>
<dbReference type="EMBL" id="CP001390">
    <property type="protein sequence ID" value="ACM21241.1"/>
    <property type="molecule type" value="Genomic_DNA"/>
</dbReference>
<dbReference type="RefSeq" id="WP_012647969.1">
    <property type="nucleotide sequence ID" value="NC_011979.1"/>
</dbReference>
<dbReference type="SMR" id="B9M2C3"/>
<dbReference type="STRING" id="316067.Geob_2898"/>
<dbReference type="KEGG" id="geo:Geob_2898"/>
<dbReference type="eggNOG" id="COG0126">
    <property type="taxonomic scope" value="Bacteria"/>
</dbReference>
<dbReference type="HOGENOM" id="CLU_025427_0_2_7"/>
<dbReference type="OrthoDB" id="9808460at2"/>
<dbReference type="UniPathway" id="UPA00109">
    <property type="reaction ID" value="UER00185"/>
</dbReference>
<dbReference type="Proteomes" id="UP000007721">
    <property type="component" value="Chromosome"/>
</dbReference>
<dbReference type="GO" id="GO:0005829">
    <property type="term" value="C:cytosol"/>
    <property type="evidence" value="ECO:0007669"/>
    <property type="project" value="TreeGrafter"/>
</dbReference>
<dbReference type="GO" id="GO:0043531">
    <property type="term" value="F:ADP binding"/>
    <property type="evidence" value="ECO:0007669"/>
    <property type="project" value="TreeGrafter"/>
</dbReference>
<dbReference type="GO" id="GO:0005524">
    <property type="term" value="F:ATP binding"/>
    <property type="evidence" value="ECO:0007669"/>
    <property type="project" value="UniProtKB-KW"/>
</dbReference>
<dbReference type="GO" id="GO:0004618">
    <property type="term" value="F:phosphoglycerate kinase activity"/>
    <property type="evidence" value="ECO:0007669"/>
    <property type="project" value="UniProtKB-UniRule"/>
</dbReference>
<dbReference type="GO" id="GO:0006094">
    <property type="term" value="P:gluconeogenesis"/>
    <property type="evidence" value="ECO:0007669"/>
    <property type="project" value="TreeGrafter"/>
</dbReference>
<dbReference type="GO" id="GO:0006096">
    <property type="term" value="P:glycolytic process"/>
    <property type="evidence" value="ECO:0007669"/>
    <property type="project" value="UniProtKB-UniRule"/>
</dbReference>
<dbReference type="CDD" id="cd00318">
    <property type="entry name" value="Phosphoglycerate_kinase"/>
    <property type="match status" value="1"/>
</dbReference>
<dbReference type="FunFam" id="3.40.50.1260:FF:000003">
    <property type="entry name" value="Phosphoglycerate kinase"/>
    <property type="match status" value="1"/>
</dbReference>
<dbReference type="FunFam" id="3.40.50.1260:FF:000006">
    <property type="entry name" value="Phosphoglycerate kinase"/>
    <property type="match status" value="1"/>
</dbReference>
<dbReference type="Gene3D" id="3.40.50.1260">
    <property type="entry name" value="Phosphoglycerate kinase, N-terminal domain"/>
    <property type="match status" value="2"/>
</dbReference>
<dbReference type="HAMAP" id="MF_00145">
    <property type="entry name" value="Phosphoglyc_kinase"/>
    <property type="match status" value="1"/>
</dbReference>
<dbReference type="InterPro" id="IPR001576">
    <property type="entry name" value="Phosphoglycerate_kinase"/>
</dbReference>
<dbReference type="InterPro" id="IPR015824">
    <property type="entry name" value="Phosphoglycerate_kinase_N"/>
</dbReference>
<dbReference type="InterPro" id="IPR036043">
    <property type="entry name" value="Phosphoglycerate_kinase_sf"/>
</dbReference>
<dbReference type="PANTHER" id="PTHR11406">
    <property type="entry name" value="PHOSPHOGLYCERATE KINASE"/>
    <property type="match status" value="1"/>
</dbReference>
<dbReference type="PANTHER" id="PTHR11406:SF23">
    <property type="entry name" value="PHOSPHOGLYCERATE KINASE 1, CHLOROPLASTIC-RELATED"/>
    <property type="match status" value="1"/>
</dbReference>
<dbReference type="Pfam" id="PF00162">
    <property type="entry name" value="PGK"/>
    <property type="match status" value="1"/>
</dbReference>
<dbReference type="PIRSF" id="PIRSF000724">
    <property type="entry name" value="Pgk"/>
    <property type="match status" value="1"/>
</dbReference>
<dbReference type="PRINTS" id="PR00477">
    <property type="entry name" value="PHGLYCKINASE"/>
</dbReference>
<dbReference type="SUPFAM" id="SSF53748">
    <property type="entry name" value="Phosphoglycerate kinase"/>
    <property type="match status" value="1"/>
</dbReference>
<organism>
    <name type="scientific">Geotalea daltonii (strain DSM 22248 / JCM 15807 / FRC-32)</name>
    <name type="common">Geobacter daltonii</name>
    <dbReference type="NCBI Taxonomy" id="316067"/>
    <lineage>
        <taxon>Bacteria</taxon>
        <taxon>Pseudomonadati</taxon>
        <taxon>Thermodesulfobacteriota</taxon>
        <taxon>Desulfuromonadia</taxon>
        <taxon>Geobacterales</taxon>
        <taxon>Geobacteraceae</taxon>
        <taxon>Geotalea</taxon>
    </lineage>
</organism>
<proteinExistence type="inferred from homology"/>
<name>PGK_GEODF</name>
<reference key="1">
    <citation type="submission" date="2009-01" db="EMBL/GenBank/DDBJ databases">
        <title>Complete sequence of Geobacter sp. FRC-32.</title>
        <authorList>
            <consortium name="US DOE Joint Genome Institute"/>
            <person name="Lucas S."/>
            <person name="Copeland A."/>
            <person name="Lapidus A."/>
            <person name="Glavina del Rio T."/>
            <person name="Dalin E."/>
            <person name="Tice H."/>
            <person name="Bruce D."/>
            <person name="Goodwin L."/>
            <person name="Pitluck S."/>
            <person name="Saunders E."/>
            <person name="Brettin T."/>
            <person name="Detter J.C."/>
            <person name="Han C."/>
            <person name="Larimer F."/>
            <person name="Land M."/>
            <person name="Hauser L."/>
            <person name="Kyrpides N."/>
            <person name="Ovchinnikova G."/>
            <person name="Kostka J."/>
            <person name="Richardson P."/>
        </authorList>
    </citation>
    <scope>NUCLEOTIDE SEQUENCE [LARGE SCALE GENOMIC DNA]</scope>
    <source>
        <strain>DSM 22248 / JCM 15807 / FRC-32</strain>
    </source>
</reference>
<feature type="chain" id="PRO_1000192833" description="Phosphoglycerate kinase">
    <location>
        <begin position="1"/>
        <end position="399"/>
    </location>
</feature>
<feature type="binding site" evidence="1">
    <location>
        <begin position="22"/>
        <end position="24"/>
    </location>
    <ligand>
        <name>substrate</name>
    </ligand>
</feature>
<feature type="binding site" evidence="1">
    <location>
        <position position="38"/>
    </location>
    <ligand>
        <name>substrate</name>
    </ligand>
</feature>
<feature type="binding site" evidence="1">
    <location>
        <begin position="61"/>
        <end position="64"/>
    </location>
    <ligand>
        <name>substrate</name>
    </ligand>
</feature>
<feature type="binding site" evidence="1">
    <location>
        <position position="120"/>
    </location>
    <ligand>
        <name>substrate</name>
    </ligand>
</feature>
<feature type="binding site" evidence="1">
    <location>
        <position position="153"/>
    </location>
    <ligand>
        <name>substrate</name>
    </ligand>
</feature>
<feature type="binding site" evidence="1">
    <location>
        <position position="204"/>
    </location>
    <ligand>
        <name>ATP</name>
        <dbReference type="ChEBI" id="CHEBI:30616"/>
    </ligand>
</feature>
<feature type="binding site" evidence="1">
    <location>
        <position position="326"/>
    </location>
    <ligand>
        <name>ATP</name>
        <dbReference type="ChEBI" id="CHEBI:30616"/>
    </ligand>
</feature>
<feature type="binding site" evidence="1">
    <location>
        <begin position="353"/>
        <end position="356"/>
    </location>
    <ligand>
        <name>ATP</name>
        <dbReference type="ChEBI" id="CHEBI:30616"/>
    </ligand>
</feature>
<keyword id="KW-0067">ATP-binding</keyword>
<keyword id="KW-0963">Cytoplasm</keyword>
<keyword id="KW-0324">Glycolysis</keyword>
<keyword id="KW-0418">Kinase</keyword>
<keyword id="KW-0547">Nucleotide-binding</keyword>
<keyword id="KW-1185">Reference proteome</keyword>
<keyword id="KW-0808">Transferase</keyword>
<gene>
    <name evidence="1" type="primary">pgk</name>
    <name type="ordered locus">Geob_2898</name>
</gene>
<accession>B9M2C3</accession>
<sequence>MSILYIDEIKDLREKLVFIRVDFNVPQDDNGNITEDTRIVGAVPTIKYAIENGAKVILASHLGRPKGEKKPKYTMAPAARRLSELLGKEVKQATDCFGPDVDAMVAALQPGDVLMLENVRFYPGEEKNDPDFACKLANGCEIYVNDAFAVSHRAHASVHAITKCIPVIAAGFLMKNEMTFFEKAMTRPVRPLAAILGGAKVSGKLEVLETLVGKVDIIIIGGGMAFTFLKARGLSVGKSLVEDDLIDTAKRILDNAAKRGIEFLLPEDCVVADRFAADADCKTVSVNDIPSEWMALDVGPASTARFSDALKEANTVIWNGPMGVFEMDRFAKGTFAIADVVAGLKNATTIIGGGDTDSAVRKAGVADKVSYISTGGGAFLELLEGKKLPGVEVLEQSGK</sequence>
<protein>
    <recommendedName>
        <fullName evidence="1">Phosphoglycerate kinase</fullName>
        <ecNumber evidence="1">2.7.2.3</ecNumber>
    </recommendedName>
</protein>